<reference key="1">
    <citation type="journal article" date="2015" name="PLoS Genet.">
        <title>The dynamic genome and transcriptome of the human fungal pathogen Blastomyces and close relative Emmonsia.</title>
        <authorList>
            <person name="Munoz J.F."/>
            <person name="Gauthier G.M."/>
            <person name="Desjardins C.A."/>
            <person name="Gallo J.E."/>
            <person name="Holder J."/>
            <person name="Sullivan T.D."/>
            <person name="Marty A.J."/>
            <person name="Carmen J.C."/>
            <person name="Chen Z."/>
            <person name="Ding L."/>
            <person name="Gujja S."/>
            <person name="Magrini V."/>
            <person name="Misas E."/>
            <person name="Mitreva M."/>
            <person name="Priest M."/>
            <person name="Saif S."/>
            <person name="Whiston E.A."/>
            <person name="Young S."/>
            <person name="Zeng Q."/>
            <person name="Goldman W.E."/>
            <person name="Mardis E.R."/>
            <person name="Taylor J.W."/>
            <person name="McEwen J.G."/>
            <person name="Clay O.K."/>
            <person name="Klein B.S."/>
            <person name="Cuomo C.A."/>
        </authorList>
    </citation>
    <scope>NUCLEOTIDE SEQUENCE [LARGE SCALE GENOMIC DNA]</scope>
    <source>
        <strain>SLH14081</strain>
    </source>
</reference>
<proteinExistence type="inferred from homology"/>
<dbReference type="EC" id="3.4.11.18" evidence="1"/>
<dbReference type="EMBL" id="GG657463">
    <property type="protein sequence ID" value="OAT11325.1"/>
    <property type="molecule type" value="Genomic_DNA"/>
</dbReference>
<dbReference type="RefSeq" id="XP_002622719.1">
    <property type="nucleotide sequence ID" value="XM_002622673.2"/>
</dbReference>
<dbReference type="SMR" id="C5JW60"/>
<dbReference type="STRING" id="559298.C5JW60"/>
<dbReference type="GeneID" id="8502916"/>
<dbReference type="KEGG" id="bgh:BDBG_06837"/>
<dbReference type="VEuPathDB" id="FungiDB:BDBG_06837"/>
<dbReference type="HOGENOM" id="CLU_015857_7_1_1"/>
<dbReference type="OrthoDB" id="7848262at2759"/>
<dbReference type="Proteomes" id="UP000002038">
    <property type="component" value="Unassembled WGS sequence"/>
</dbReference>
<dbReference type="GO" id="GO:0005737">
    <property type="term" value="C:cytoplasm"/>
    <property type="evidence" value="ECO:0007669"/>
    <property type="project" value="UniProtKB-SubCell"/>
</dbReference>
<dbReference type="GO" id="GO:0004239">
    <property type="term" value="F:initiator methionyl aminopeptidase activity"/>
    <property type="evidence" value="ECO:0007669"/>
    <property type="project" value="UniProtKB-UniRule"/>
</dbReference>
<dbReference type="GO" id="GO:0046872">
    <property type="term" value="F:metal ion binding"/>
    <property type="evidence" value="ECO:0007669"/>
    <property type="project" value="UniProtKB-UniRule"/>
</dbReference>
<dbReference type="GO" id="GO:0070006">
    <property type="term" value="F:metalloaminopeptidase activity"/>
    <property type="evidence" value="ECO:0007669"/>
    <property type="project" value="UniProtKB-UniRule"/>
</dbReference>
<dbReference type="GO" id="GO:0006508">
    <property type="term" value="P:proteolysis"/>
    <property type="evidence" value="ECO:0007669"/>
    <property type="project" value="UniProtKB-KW"/>
</dbReference>
<dbReference type="CDD" id="cd01088">
    <property type="entry name" value="MetAP2"/>
    <property type="match status" value="1"/>
</dbReference>
<dbReference type="Gene3D" id="3.90.230.10">
    <property type="entry name" value="Creatinase/methionine aminopeptidase superfamily"/>
    <property type="match status" value="1"/>
</dbReference>
<dbReference type="Gene3D" id="1.10.10.10">
    <property type="entry name" value="Winged helix-like DNA-binding domain superfamily/Winged helix DNA-binding domain"/>
    <property type="match status" value="1"/>
</dbReference>
<dbReference type="HAMAP" id="MF_03175">
    <property type="entry name" value="MetAP_2_euk"/>
    <property type="match status" value="1"/>
</dbReference>
<dbReference type="InterPro" id="IPR036005">
    <property type="entry name" value="Creatinase/aminopeptidase-like"/>
</dbReference>
<dbReference type="InterPro" id="IPR050247">
    <property type="entry name" value="Met_Aminopeptidase_Type2"/>
</dbReference>
<dbReference type="InterPro" id="IPR000994">
    <property type="entry name" value="Pept_M24"/>
</dbReference>
<dbReference type="InterPro" id="IPR001714">
    <property type="entry name" value="Pept_M24_MAP"/>
</dbReference>
<dbReference type="InterPro" id="IPR002468">
    <property type="entry name" value="Pept_M24A_MAP2"/>
</dbReference>
<dbReference type="InterPro" id="IPR018349">
    <property type="entry name" value="Pept_M24A_MAP2_BS"/>
</dbReference>
<dbReference type="InterPro" id="IPR036388">
    <property type="entry name" value="WH-like_DNA-bd_sf"/>
</dbReference>
<dbReference type="InterPro" id="IPR036390">
    <property type="entry name" value="WH_DNA-bd_sf"/>
</dbReference>
<dbReference type="NCBIfam" id="TIGR00501">
    <property type="entry name" value="met_pdase_II"/>
    <property type="match status" value="1"/>
</dbReference>
<dbReference type="PANTHER" id="PTHR45777">
    <property type="entry name" value="METHIONINE AMINOPEPTIDASE 2"/>
    <property type="match status" value="1"/>
</dbReference>
<dbReference type="PANTHER" id="PTHR45777:SF2">
    <property type="entry name" value="METHIONINE AMINOPEPTIDASE 2"/>
    <property type="match status" value="1"/>
</dbReference>
<dbReference type="Pfam" id="PF00557">
    <property type="entry name" value="Peptidase_M24"/>
    <property type="match status" value="1"/>
</dbReference>
<dbReference type="PRINTS" id="PR00599">
    <property type="entry name" value="MAPEPTIDASE"/>
</dbReference>
<dbReference type="SUPFAM" id="SSF55920">
    <property type="entry name" value="Creatinase/aminopeptidase"/>
    <property type="match status" value="1"/>
</dbReference>
<dbReference type="SUPFAM" id="SSF46785">
    <property type="entry name" value="Winged helix' DNA-binding domain"/>
    <property type="match status" value="1"/>
</dbReference>
<dbReference type="PROSITE" id="PS01202">
    <property type="entry name" value="MAP_2"/>
    <property type="match status" value="1"/>
</dbReference>
<feature type="chain" id="PRO_0000407595" description="Methionine aminopeptidase 2-1">
    <location>
        <begin position="1"/>
        <end position="446"/>
    </location>
</feature>
<feature type="region of interest" description="Disordered" evidence="2">
    <location>
        <begin position="1"/>
        <end position="88"/>
    </location>
</feature>
<feature type="compositionally biased region" description="Acidic residues" evidence="2">
    <location>
        <begin position="32"/>
        <end position="44"/>
    </location>
</feature>
<feature type="compositionally biased region" description="Basic residues" evidence="2">
    <location>
        <begin position="57"/>
        <end position="72"/>
    </location>
</feature>
<feature type="binding site" evidence="1">
    <location>
        <position position="196"/>
    </location>
    <ligand>
        <name>substrate</name>
    </ligand>
</feature>
<feature type="binding site" evidence="1">
    <location>
        <position position="216"/>
    </location>
    <ligand>
        <name>a divalent metal cation</name>
        <dbReference type="ChEBI" id="CHEBI:60240"/>
        <label>1</label>
    </ligand>
</feature>
<feature type="binding site" evidence="1">
    <location>
        <position position="227"/>
    </location>
    <ligand>
        <name>a divalent metal cation</name>
        <dbReference type="ChEBI" id="CHEBI:60240"/>
        <label>1</label>
    </ligand>
</feature>
<feature type="binding site" evidence="1">
    <location>
        <position position="227"/>
    </location>
    <ligand>
        <name>a divalent metal cation</name>
        <dbReference type="ChEBI" id="CHEBI:60240"/>
        <label>2</label>
        <note>catalytic</note>
    </ligand>
</feature>
<feature type="binding site" evidence="1">
    <location>
        <position position="296"/>
    </location>
    <ligand>
        <name>a divalent metal cation</name>
        <dbReference type="ChEBI" id="CHEBI:60240"/>
        <label>2</label>
        <note>catalytic</note>
    </ligand>
</feature>
<feature type="binding site" evidence="1">
    <location>
        <position position="304"/>
    </location>
    <ligand>
        <name>substrate</name>
    </ligand>
</feature>
<feature type="binding site" evidence="1">
    <location>
        <position position="332"/>
    </location>
    <ligand>
        <name>a divalent metal cation</name>
        <dbReference type="ChEBI" id="CHEBI:60240"/>
        <label>2</label>
        <note>catalytic</note>
    </ligand>
</feature>
<feature type="binding site" evidence="1">
    <location>
        <position position="427"/>
    </location>
    <ligand>
        <name>a divalent metal cation</name>
        <dbReference type="ChEBI" id="CHEBI:60240"/>
        <label>1</label>
    </ligand>
</feature>
<feature type="binding site" evidence="1">
    <location>
        <position position="427"/>
    </location>
    <ligand>
        <name>a divalent metal cation</name>
        <dbReference type="ChEBI" id="CHEBI:60240"/>
        <label>2</label>
        <note>catalytic</note>
    </ligand>
</feature>
<gene>
    <name type="ORF">BDBG_06837</name>
</gene>
<keyword id="KW-0031">Aminopeptidase</keyword>
<keyword id="KW-0963">Cytoplasm</keyword>
<keyword id="KW-0378">Hydrolase</keyword>
<keyword id="KW-0479">Metal-binding</keyword>
<keyword id="KW-0645">Protease</keyword>
<keyword id="KW-1185">Reference proteome</keyword>
<protein>
    <recommendedName>
        <fullName evidence="1">Methionine aminopeptidase 2-1</fullName>
        <shortName evidence="1">MAP 2-1</shortName>
        <shortName evidence="1">MetAP 2-1</shortName>
        <ecNumber evidence="1">3.4.11.18</ecNumber>
    </recommendedName>
    <alternativeName>
        <fullName evidence="1">Peptidase M</fullName>
    </alternativeName>
</protein>
<organism>
    <name type="scientific">Blastomyces gilchristii (strain SLH14081)</name>
    <name type="common">Blastomyces dermatitidis</name>
    <dbReference type="NCBI Taxonomy" id="559298"/>
    <lineage>
        <taxon>Eukaryota</taxon>
        <taxon>Fungi</taxon>
        <taxon>Dikarya</taxon>
        <taxon>Ascomycota</taxon>
        <taxon>Pezizomycotina</taxon>
        <taxon>Eurotiomycetes</taxon>
        <taxon>Eurotiomycetidae</taxon>
        <taxon>Onygenales</taxon>
        <taxon>Ajellomycetaceae</taxon>
        <taxon>Blastomyces</taxon>
    </lineage>
</organism>
<name>MAP21_BLAGS</name>
<evidence type="ECO:0000255" key="1">
    <source>
        <dbReference type="HAMAP-Rule" id="MF_03175"/>
    </source>
</evidence>
<evidence type="ECO:0000256" key="2">
    <source>
        <dbReference type="SAM" id="MobiDB-lite"/>
    </source>
</evidence>
<comment type="function">
    <text evidence="1">Cotranslationally removes the N-terminal methionine from nascent proteins. The N-terminal methionine is often cleaved when the second residue in the primary sequence is small and uncharged (Met-Ala-, Cys, Gly, Pro, Ser, Thr, or Val).</text>
</comment>
<comment type="catalytic activity">
    <reaction evidence="1">
        <text>Release of N-terminal amino acids, preferentially methionine, from peptides and arylamides.</text>
        <dbReference type="EC" id="3.4.11.18"/>
    </reaction>
</comment>
<comment type="cofactor">
    <cofactor evidence="1">
        <name>Co(2+)</name>
        <dbReference type="ChEBI" id="CHEBI:48828"/>
    </cofactor>
    <cofactor evidence="1">
        <name>Zn(2+)</name>
        <dbReference type="ChEBI" id="CHEBI:29105"/>
    </cofactor>
    <cofactor evidence="1">
        <name>Mn(2+)</name>
        <dbReference type="ChEBI" id="CHEBI:29035"/>
    </cofactor>
    <cofactor evidence="1">
        <name>Fe(2+)</name>
        <dbReference type="ChEBI" id="CHEBI:29033"/>
    </cofactor>
    <text evidence="1">Binds 2 divalent metal cations per subunit. Has a high-affinity and a low affinity metal-binding site. The true nature of the physiological cofactor is under debate. The enzyme is active with cobalt, zinc, manganese or divalent iron ions. Most likely, methionine aminopeptidases function as mononuclear Fe(2+)-metalloproteases under physiological conditions, and the catalytically relevant metal-binding site has been assigned to the histidine-containing high-affinity site.</text>
</comment>
<comment type="subcellular location">
    <subcellularLocation>
        <location evidence="1">Cytoplasm</location>
    </subcellularLocation>
</comment>
<comment type="similarity">
    <text evidence="1">Belongs to the peptidase M24A family. Methionine aminopeptidase eukaryotic type 2 subfamily.</text>
</comment>
<sequence length="446" mass="49025">MAAQVTPELANLNSKPEGGAPPKQVPVKDVPENEDVESDDDNEGDQGAGEPGSTGAAKKKKKKKPKKKKKGGPKVQTEPPRVILSSIFPNNDYPVGELVEYKDDNAYRTTNEEKRYLDRMNNDFLSEYRYAAEVHRQVRQYAQKTIKPGQTLTEIAEGIEDSVRALTGHDGLTEGDNLLGGIAFPTGVNLNHCAAHYSPNAGNKMVLQYEDVMKVDFGVHINGRIVDSAFTVAFDPVYDNLLAAVKDATNTGIREAGIDVRMSDIGAAIQETMESYEVEIKGTTYPVKPIRNLNGHTIGQFEIHGGKNGKSVPIVKGGDQSKMEEGEVYAIETFGSTGRGYVRDDMETSHYAKVPDAPNVPLRLSSAKNLLNVITKNFGTLPFCRRYLDRLGQDKYLLGLNNLVANGIVDAYPPLCDIKGSYTAQFEHTILLRPNIKEVISRGYDY</sequence>
<accession>C5JW60</accession>
<accession>A0A179UT75</accession>